<sequence>MNHLKTAILLAGLTALFMAVGFAIGGRGGMMIAFVVASATNLFSYWNSDKMVLRMYGAREVDETTAPDFVRMVHELARRADLPPPRVFIMDNPQPNAFATGRNPQNAAVAATTGLLQSLSPEEVAGVMAHELAHIKHYDTLTMTMTATIAGAISMLANFGLLFGGGNRNNNNPFGAIGTILMVILAPLAAMLVQMAISRSREYEADRGGAEILGRPMALASALAKISGAAHEVPNYEAESNPATAHMFIINPLSGARMDNLFSTHPAVENRIAALRALSQQMGGGGFAPGPAPAVRPPGGNPWGVDPGGGQRRGPWG</sequence>
<comment type="cofactor">
    <cofactor evidence="1">
        <name>Zn(2+)</name>
        <dbReference type="ChEBI" id="CHEBI:29105"/>
    </cofactor>
    <text evidence="1">Binds 1 zinc ion per subunit.</text>
</comment>
<comment type="subcellular location">
    <subcellularLocation>
        <location evidence="1">Cell inner membrane</location>
        <topology evidence="1">Multi-pass membrane protein</topology>
    </subcellularLocation>
</comment>
<comment type="similarity">
    <text evidence="1">Belongs to the peptidase M48B family.</text>
</comment>
<reference key="1">
    <citation type="submission" date="2007-07" db="EMBL/GenBank/DDBJ databases">
        <title>Complete sequence of chromosome of Xanthobacter autotrophicus Py2.</title>
        <authorList>
            <consortium name="US DOE Joint Genome Institute"/>
            <person name="Copeland A."/>
            <person name="Lucas S."/>
            <person name="Lapidus A."/>
            <person name="Barry K."/>
            <person name="Glavina del Rio T."/>
            <person name="Hammon N."/>
            <person name="Israni S."/>
            <person name="Dalin E."/>
            <person name="Tice H."/>
            <person name="Pitluck S."/>
            <person name="Sims D."/>
            <person name="Brettin T."/>
            <person name="Bruce D."/>
            <person name="Detter J.C."/>
            <person name="Han C."/>
            <person name="Tapia R."/>
            <person name="Brainard J."/>
            <person name="Schmutz J."/>
            <person name="Larimer F."/>
            <person name="Land M."/>
            <person name="Hauser L."/>
            <person name="Kyrpides N."/>
            <person name="Kim E."/>
            <person name="Ensigns S.A."/>
            <person name="Richardson P."/>
        </authorList>
    </citation>
    <scope>NUCLEOTIDE SEQUENCE [LARGE SCALE GENOMIC DNA]</scope>
    <source>
        <strain>ATCC BAA-1158 / Py2</strain>
    </source>
</reference>
<organism>
    <name type="scientific">Xanthobacter autotrophicus (strain ATCC BAA-1158 / Py2)</name>
    <dbReference type="NCBI Taxonomy" id="78245"/>
    <lineage>
        <taxon>Bacteria</taxon>
        <taxon>Pseudomonadati</taxon>
        <taxon>Pseudomonadota</taxon>
        <taxon>Alphaproteobacteria</taxon>
        <taxon>Hyphomicrobiales</taxon>
        <taxon>Xanthobacteraceae</taxon>
        <taxon>Xanthobacter</taxon>
    </lineage>
</organism>
<proteinExistence type="inferred from homology"/>
<accession>A7IBA0</accession>
<dbReference type="EC" id="3.4.24.-" evidence="1"/>
<dbReference type="EMBL" id="CP000781">
    <property type="protein sequence ID" value="ABS65293.1"/>
    <property type="molecule type" value="Genomic_DNA"/>
</dbReference>
<dbReference type="STRING" id="78245.Xaut_0034"/>
<dbReference type="KEGG" id="xau:Xaut_0034"/>
<dbReference type="eggNOG" id="COG0501">
    <property type="taxonomic scope" value="Bacteria"/>
</dbReference>
<dbReference type="HOGENOM" id="CLU_042266_3_0_5"/>
<dbReference type="OrthoDB" id="15218at2"/>
<dbReference type="PhylomeDB" id="A7IBA0"/>
<dbReference type="Proteomes" id="UP000002417">
    <property type="component" value="Chromosome"/>
</dbReference>
<dbReference type="GO" id="GO:0005886">
    <property type="term" value="C:plasma membrane"/>
    <property type="evidence" value="ECO:0007669"/>
    <property type="project" value="UniProtKB-SubCell"/>
</dbReference>
<dbReference type="GO" id="GO:0004222">
    <property type="term" value="F:metalloendopeptidase activity"/>
    <property type="evidence" value="ECO:0007669"/>
    <property type="project" value="UniProtKB-UniRule"/>
</dbReference>
<dbReference type="GO" id="GO:0008270">
    <property type="term" value="F:zinc ion binding"/>
    <property type="evidence" value="ECO:0007669"/>
    <property type="project" value="UniProtKB-UniRule"/>
</dbReference>
<dbReference type="GO" id="GO:0006508">
    <property type="term" value="P:proteolysis"/>
    <property type="evidence" value="ECO:0007669"/>
    <property type="project" value="UniProtKB-KW"/>
</dbReference>
<dbReference type="CDD" id="cd07336">
    <property type="entry name" value="M48B_HtpX_like"/>
    <property type="match status" value="1"/>
</dbReference>
<dbReference type="Gene3D" id="3.30.2010.10">
    <property type="entry name" value="Metalloproteases ('zincins'), catalytic domain"/>
    <property type="match status" value="1"/>
</dbReference>
<dbReference type="HAMAP" id="MF_00188">
    <property type="entry name" value="Pept_M48_protease_HtpX"/>
    <property type="match status" value="1"/>
</dbReference>
<dbReference type="InterPro" id="IPR050083">
    <property type="entry name" value="HtpX_protease"/>
</dbReference>
<dbReference type="InterPro" id="IPR022919">
    <property type="entry name" value="Pept_M48_protease_HtpX"/>
</dbReference>
<dbReference type="InterPro" id="IPR001915">
    <property type="entry name" value="Peptidase_M48"/>
</dbReference>
<dbReference type="NCBIfam" id="NF002363">
    <property type="entry name" value="PRK01345.1"/>
    <property type="match status" value="1"/>
</dbReference>
<dbReference type="NCBIfam" id="NF002826">
    <property type="entry name" value="PRK03001.1"/>
    <property type="match status" value="1"/>
</dbReference>
<dbReference type="PANTHER" id="PTHR43221">
    <property type="entry name" value="PROTEASE HTPX"/>
    <property type="match status" value="1"/>
</dbReference>
<dbReference type="PANTHER" id="PTHR43221:SF1">
    <property type="entry name" value="PROTEASE HTPX"/>
    <property type="match status" value="1"/>
</dbReference>
<dbReference type="Pfam" id="PF01435">
    <property type="entry name" value="Peptidase_M48"/>
    <property type="match status" value="1"/>
</dbReference>
<protein>
    <recommendedName>
        <fullName evidence="1">Protease HtpX homolog</fullName>
        <ecNumber evidence="1">3.4.24.-</ecNumber>
    </recommendedName>
</protein>
<name>HTPX_XANP2</name>
<keyword id="KW-0997">Cell inner membrane</keyword>
<keyword id="KW-1003">Cell membrane</keyword>
<keyword id="KW-0378">Hydrolase</keyword>
<keyword id="KW-0472">Membrane</keyword>
<keyword id="KW-0479">Metal-binding</keyword>
<keyword id="KW-0482">Metalloprotease</keyword>
<keyword id="KW-0645">Protease</keyword>
<keyword id="KW-1185">Reference proteome</keyword>
<keyword id="KW-0812">Transmembrane</keyword>
<keyword id="KW-1133">Transmembrane helix</keyword>
<keyword id="KW-0862">Zinc</keyword>
<evidence type="ECO:0000255" key="1">
    <source>
        <dbReference type="HAMAP-Rule" id="MF_00188"/>
    </source>
</evidence>
<evidence type="ECO:0000256" key="2">
    <source>
        <dbReference type="SAM" id="MobiDB-lite"/>
    </source>
</evidence>
<gene>
    <name evidence="1" type="primary">htpX</name>
    <name type="ordered locus">Xaut_0034</name>
</gene>
<feature type="chain" id="PRO_1000098860" description="Protease HtpX homolog">
    <location>
        <begin position="1"/>
        <end position="317"/>
    </location>
</feature>
<feature type="transmembrane region" description="Helical" evidence="1">
    <location>
        <begin position="6"/>
        <end position="26"/>
    </location>
</feature>
<feature type="transmembrane region" description="Helical" evidence="1">
    <location>
        <begin position="28"/>
        <end position="48"/>
    </location>
</feature>
<feature type="transmembrane region" description="Helical" evidence="1">
    <location>
        <begin position="145"/>
        <end position="165"/>
    </location>
</feature>
<feature type="transmembrane region" description="Helical" evidence="1">
    <location>
        <begin position="173"/>
        <end position="193"/>
    </location>
</feature>
<feature type="region of interest" description="Disordered" evidence="2">
    <location>
        <begin position="283"/>
        <end position="317"/>
    </location>
</feature>
<feature type="compositionally biased region" description="Pro residues" evidence="2">
    <location>
        <begin position="290"/>
        <end position="300"/>
    </location>
</feature>
<feature type="compositionally biased region" description="Gly residues" evidence="2">
    <location>
        <begin position="306"/>
        <end position="317"/>
    </location>
</feature>
<feature type="active site" evidence="1">
    <location>
        <position position="131"/>
    </location>
</feature>
<feature type="binding site" evidence="1">
    <location>
        <position position="130"/>
    </location>
    <ligand>
        <name>Zn(2+)</name>
        <dbReference type="ChEBI" id="CHEBI:29105"/>
        <note>catalytic</note>
    </ligand>
</feature>
<feature type="binding site" evidence="1">
    <location>
        <position position="134"/>
    </location>
    <ligand>
        <name>Zn(2+)</name>
        <dbReference type="ChEBI" id="CHEBI:29105"/>
        <note>catalytic</note>
    </ligand>
</feature>
<feature type="binding site" evidence="1">
    <location>
        <position position="202"/>
    </location>
    <ligand>
        <name>Zn(2+)</name>
        <dbReference type="ChEBI" id="CHEBI:29105"/>
        <note>catalytic</note>
    </ligand>
</feature>